<name>DCUP_BRUSU</name>
<reference key="1">
    <citation type="journal article" date="2002" name="Proc. Natl. Acad. Sci. U.S.A.">
        <title>The Brucella suis genome reveals fundamental similarities between animal and plant pathogens and symbionts.</title>
        <authorList>
            <person name="Paulsen I.T."/>
            <person name="Seshadri R."/>
            <person name="Nelson K.E."/>
            <person name="Eisen J.A."/>
            <person name="Heidelberg J.F."/>
            <person name="Read T.D."/>
            <person name="Dodson R.J."/>
            <person name="Umayam L.A."/>
            <person name="Brinkac L.M."/>
            <person name="Beanan M.J."/>
            <person name="Daugherty S.C."/>
            <person name="DeBoy R.T."/>
            <person name="Durkin A.S."/>
            <person name="Kolonay J.F."/>
            <person name="Madupu R."/>
            <person name="Nelson W.C."/>
            <person name="Ayodeji B."/>
            <person name="Kraul M."/>
            <person name="Shetty J."/>
            <person name="Malek J.A."/>
            <person name="Van Aken S.E."/>
            <person name="Riedmuller S."/>
            <person name="Tettelin H."/>
            <person name="Gill S.R."/>
            <person name="White O."/>
            <person name="Salzberg S.L."/>
            <person name="Hoover D.L."/>
            <person name="Lindler L.E."/>
            <person name="Halling S.M."/>
            <person name="Boyle S.M."/>
            <person name="Fraser C.M."/>
        </authorList>
    </citation>
    <scope>NUCLEOTIDE SEQUENCE [LARGE SCALE GENOMIC DNA]</scope>
    <source>
        <strain>1330</strain>
    </source>
</reference>
<reference key="2">
    <citation type="journal article" date="2011" name="J. Bacteriol.">
        <title>Revised genome sequence of Brucella suis 1330.</title>
        <authorList>
            <person name="Tae H."/>
            <person name="Shallom S."/>
            <person name="Settlage R."/>
            <person name="Preston D."/>
            <person name="Adams L.G."/>
            <person name="Garner H.R."/>
        </authorList>
    </citation>
    <scope>NUCLEOTIDE SEQUENCE [LARGE SCALE GENOMIC DNA]</scope>
    <source>
        <strain>1330</strain>
    </source>
</reference>
<sequence length="341" mass="37831">MNRKVLKVIDGETVFPPPIWMMRQAGRYLPEYRETRKKAGSFLDLCYSPDLAVEVTLQPIRRFGFDAAILFSDILVVPHALGRDLRFEEGKGPLMTPIDADEIFWLETEGVAKRLEPVYETVRLVREQLPDETTLLGFCGAPWTVATYMIAGHGTPDQAPARLFAYRFPEAFEKLLNDLADVSAEYLIEQLGAGADAVQIFDSWSGVLDEDCFERFCIRPVARIVQKVRAVYPQARIIGFPKGAGMLYAGYREKTGVDMLGLDWSVPLSFAALLQEEGAVQGNLDPLRVVAGGNALDEGVDAILERMGQGPLVFNLGHGITPQAPIENVQRMIDRVRGGKS</sequence>
<feature type="chain" id="PRO_0000187590" description="Uroporphyrinogen decarboxylase">
    <location>
        <begin position="1"/>
        <end position="341"/>
    </location>
</feature>
<feature type="binding site" evidence="1">
    <location>
        <begin position="23"/>
        <end position="27"/>
    </location>
    <ligand>
        <name>substrate</name>
    </ligand>
</feature>
<feature type="binding site" evidence="1">
    <location>
        <position position="42"/>
    </location>
    <ligand>
        <name>substrate</name>
    </ligand>
</feature>
<feature type="binding site" evidence="1">
    <location>
        <position position="73"/>
    </location>
    <ligand>
        <name>substrate</name>
    </ligand>
</feature>
<feature type="binding site" evidence="1">
    <location>
        <position position="148"/>
    </location>
    <ligand>
        <name>substrate</name>
    </ligand>
</feature>
<feature type="binding site" evidence="1">
    <location>
        <position position="203"/>
    </location>
    <ligand>
        <name>substrate</name>
    </ligand>
</feature>
<feature type="binding site" evidence="1">
    <location>
        <position position="318"/>
    </location>
    <ligand>
        <name>substrate</name>
    </ligand>
</feature>
<feature type="site" description="Transition state stabilizer" evidence="1">
    <location>
        <position position="73"/>
    </location>
</feature>
<evidence type="ECO:0000255" key="1">
    <source>
        <dbReference type="HAMAP-Rule" id="MF_00218"/>
    </source>
</evidence>
<proteinExistence type="inferred from homology"/>
<keyword id="KW-0963">Cytoplasm</keyword>
<keyword id="KW-0210">Decarboxylase</keyword>
<keyword id="KW-0456">Lyase</keyword>
<keyword id="KW-0627">Porphyrin biosynthesis</keyword>
<dbReference type="EC" id="4.1.1.37" evidence="1"/>
<dbReference type="EMBL" id="AE014291">
    <property type="protein sequence ID" value="AAN30956.1"/>
    <property type="molecule type" value="Genomic_DNA"/>
</dbReference>
<dbReference type="EMBL" id="CP002997">
    <property type="protein sequence ID" value="AEM19373.1"/>
    <property type="molecule type" value="Genomic_DNA"/>
</dbReference>
<dbReference type="RefSeq" id="WP_002965130.1">
    <property type="nucleotide sequence ID" value="NZ_KN046804.1"/>
</dbReference>
<dbReference type="SMR" id="Q8FY24"/>
<dbReference type="GeneID" id="93017623"/>
<dbReference type="KEGG" id="bms:BR2066"/>
<dbReference type="KEGG" id="bsi:BS1330_I2060"/>
<dbReference type="PATRIC" id="fig|204722.21.peg.1272"/>
<dbReference type="HOGENOM" id="CLU_040933_0_0_5"/>
<dbReference type="PhylomeDB" id="Q8FY24"/>
<dbReference type="UniPathway" id="UPA00251">
    <property type="reaction ID" value="UER00321"/>
</dbReference>
<dbReference type="Proteomes" id="UP000007104">
    <property type="component" value="Chromosome I"/>
</dbReference>
<dbReference type="GO" id="GO:0005829">
    <property type="term" value="C:cytosol"/>
    <property type="evidence" value="ECO:0007669"/>
    <property type="project" value="TreeGrafter"/>
</dbReference>
<dbReference type="GO" id="GO:0004853">
    <property type="term" value="F:uroporphyrinogen decarboxylase activity"/>
    <property type="evidence" value="ECO:0007669"/>
    <property type="project" value="UniProtKB-UniRule"/>
</dbReference>
<dbReference type="GO" id="GO:0019353">
    <property type="term" value="P:protoporphyrinogen IX biosynthetic process from glutamate"/>
    <property type="evidence" value="ECO:0007669"/>
    <property type="project" value="TreeGrafter"/>
</dbReference>
<dbReference type="CDD" id="cd00717">
    <property type="entry name" value="URO-D"/>
    <property type="match status" value="1"/>
</dbReference>
<dbReference type="FunFam" id="3.20.20.210:FF:000007">
    <property type="entry name" value="Uroporphyrinogen decarboxylase"/>
    <property type="match status" value="1"/>
</dbReference>
<dbReference type="Gene3D" id="3.20.20.210">
    <property type="match status" value="1"/>
</dbReference>
<dbReference type="HAMAP" id="MF_00218">
    <property type="entry name" value="URO_D"/>
    <property type="match status" value="1"/>
</dbReference>
<dbReference type="InterPro" id="IPR038071">
    <property type="entry name" value="UROD/MetE-like_sf"/>
</dbReference>
<dbReference type="InterPro" id="IPR006361">
    <property type="entry name" value="Uroporphyrinogen_deCO2ase_HemE"/>
</dbReference>
<dbReference type="InterPro" id="IPR000257">
    <property type="entry name" value="Uroporphyrinogen_deCOase"/>
</dbReference>
<dbReference type="NCBIfam" id="TIGR01464">
    <property type="entry name" value="hemE"/>
    <property type="match status" value="1"/>
</dbReference>
<dbReference type="PANTHER" id="PTHR21091">
    <property type="entry name" value="METHYLTETRAHYDROFOLATE:HOMOCYSTEINE METHYLTRANSFERASE RELATED"/>
    <property type="match status" value="1"/>
</dbReference>
<dbReference type="PANTHER" id="PTHR21091:SF169">
    <property type="entry name" value="UROPORPHYRINOGEN DECARBOXYLASE"/>
    <property type="match status" value="1"/>
</dbReference>
<dbReference type="Pfam" id="PF01208">
    <property type="entry name" value="URO-D"/>
    <property type="match status" value="1"/>
</dbReference>
<dbReference type="SUPFAM" id="SSF51726">
    <property type="entry name" value="UROD/MetE-like"/>
    <property type="match status" value="1"/>
</dbReference>
<dbReference type="PROSITE" id="PS00906">
    <property type="entry name" value="UROD_1"/>
    <property type="match status" value="1"/>
</dbReference>
<dbReference type="PROSITE" id="PS00907">
    <property type="entry name" value="UROD_2"/>
    <property type="match status" value="1"/>
</dbReference>
<accession>Q8FY24</accession>
<accession>G0K914</accession>
<protein>
    <recommendedName>
        <fullName evidence="1">Uroporphyrinogen decarboxylase</fullName>
        <shortName evidence="1">UPD</shortName>
        <shortName evidence="1">URO-D</shortName>
        <ecNumber evidence="1">4.1.1.37</ecNumber>
    </recommendedName>
</protein>
<gene>
    <name evidence="1" type="primary">hemE</name>
    <name type="ordered locus">BR2066</name>
    <name type="ordered locus">BS1330_I2060</name>
</gene>
<comment type="function">
    <text evidence="1">Catalyzes the decarboxylation of four acetate groups of uroporphyrinogen-III to yield coproporphyrinogen-III.</text>
</comment>
<comment type="catalytic activity">
    <reaction evidence="1">
        <text>uroporphyrinogen III + 4 H(+) = coproporphyrinogen III + 4 CO2</text>
        <dbReference type="Rhea" id="RHEA:19865"/>
        <dbReference type="ChEBI" id="CHEBI:15378"/>
        <dbReference type="ChEBI" id="CHEBI:16526"/>
        <dbReference type="ChEBI" id="CHEBI:57308"/>
        <dbReference type="ChEBI" id="CHEBI:57309"/>
        <dbReference type="EC" id="4.1.1.37"/>
    </reaction>
</comment>
<comment type="pathway">
    <text evidence="1">Porphyrin-containing compound metabolism; protoporphyrin-IX biosynthesis; coproporphyrinogen-III from 5-aminolevulinate: step 4/4.</text>
</comment>
<comment type="subunit">
    <text evidence="1">Homodimer.</text>
</comment>
<comment type="subcellular location">
    <subcellularLocation>
        <location evidence="1">Cytoplasm</location>
    </subcellularLocation>
</comment>
<comment type="similarity">
    <text evidence="1">Belongs to the uroporphyrinogen decarboxylase family.</text>
</comment>
<organism>
    <name type="scientific">Brucella suis biovar 1 (strain 1330)</name>
    <dbReference type="NCBI Taxonomy" id="204722"/>
    <lineage>
        <taxon>Bacteria</taxon>
        <taxon>Pseudomonadati</taxon>
        <taxon>Pseudomonadota</taxon>
        <taxon>Alphaproteobacteria</taxon>
        <taxon>Hyphomicrobiales</taxon>
        <taxon>Brucellaceae</taxon>
        <taxon>Brucella/Ochrobactrum group</taxon>
        <taxon>Brucella</taxon>
    </lineage>
</organism>